<reference key="1">
    <citation type="journal article" date="2008" name="J. Virol.">
        <title>Molecular characterization of a subgroup specificity associated with the rotavirus inner capsid protein VP2.</title>
        <authorList>
            <person name="McDonald S.M."/>
            <person name="Patton J.T."/>
        </authorList>
    </citation>
    <scope>NUCLEOTIDE SEQUENCE [GENOMIC RNA]</scope>
</reference>
<reference key="2">
    <citation type="journal article" date="1989" name="Nucleic Acids Res.">
        <title>Nucleotide sequence of genomic segment 2 of the human rotavirus Wa.</title>
        <authorList>
            <person name="Ernst H."/>
            <person name="Duhl J.A."/>
        </authorList>
    </citation>
    <scope>NUCLEOTIDE SEQUENCE [GENOMIC RNA]</scope>
</reference>
<organism>
    <name type="scientific">Rotavirus A (strain RVA/Human/United States/Wa/1974/G1P1A[8])</name>
    <name type="common">RV-A</name>
    <dbReference type="NCBI Taxonomy" id="10962"/>
    <lineage>
        <taxon>Viruses</taxon>
        <taxon>Riboviria</taxon>
        <taxon>Orthornavirae</taxon>
        <taxon>Duplornaviricota</taxon>
        <taxon>Resentoviricetes</taxon>
        <taxon>Reovirales</taxon>
        <taxon>Sedoreoviridae</taxon>
        <taxon>Rotavirus</taxon>
        <taxon>Rotavirus A</taxon>
    </lineage>
</organism>
<sequence length="890" mass="103751">MAYRKRGAKRENLPQQNERLQEKEIEKDVDVTMENKNNNRKQQLSDKVLSQKEEIITDAQDDIKIAGEIKKSSKEESKQLLEILKTKEDHQKEIQYEILQKTIPTFESKESILKKLEDIRPEQAKKQMKLFRIFEPKQLPIYRANGEKELRNRWYWKLKKDTLPDGDYDVREYFLNLYDQILIEMPDYLLLKDMAVENKNSRDAGKVVDSETANICDAIFQDEETEGVVRRFIADMRQQVQADRNIVNYPSILHPIDHAFNEYFLNHQLVEPLNNEIIFNYIPERIRNDVNYILNMDMNLPSTARYIRPNLLQDRLNLHDNFESLWDTITTSNYILARSVVPDLKEKELVSTEAQIQKMSQDLQLEALTIQSETQFLAGINSQAANDCFKTLIAAMLSQRTMSLDFVTTNYMSLISGMWLLTVIPNDMFLRESLVACELAIINTIVYPAFGMQRMHYRNGDPQTPFQIAEQQIQNFQVANWLHFINNNRFRQVVIDGVLNQTLNDNIRNGQVINQLMEALMQLSRQQFPTMPVDYKRSIQRGILLLSNRLGQLVDLTRLVSYNYETLMACVTMNMQHVQTLTTEKLQLTSVTSLCMLIGNTTVIPSPQTLFHYYNINVNFHSNYNERINDAVAIITAANRLNLYQKKMKSIVEDFLKRLQIFDVPRVPDDQMYRLRDRLRLLPVERRRLDIFNLILMNMEQIERASDKIAQGVIIAYRDMQLERDEMYGYVNIARNLDGYQQINLEELMRTGDYGQITNMLLNNQPVALVGALPFVTDSSVISLIAKLDATVFAQIVKLRKVDTLKPILYKINSDSNDFYLVANYDWIPTSTTKVYKQVPQPFDFRASMHMLTSNLTFTVYSDLLSFVSADTVEPINAVAFDNMRIMNEL</sequence>
<accession>P11231</accession>
<evidence type="ECO:0000255" key="1">
    <source>
        <dbReference type="HAMAP-Rule" id="MF_04127"/>
    </source>
</evidence>
<evidence type="ECO:0000256" key="2">
    <source>
        <dbReference type="SAM" id="MobiDB-lite"/>
    </source>
</evidence>
<name>VP2_ROTHW</name>
<comment type="function">
    <text evidence="1">Inner capsid protein that self-assembles to form an icosahedral capsid with a T=2 symmetry, which consists of 120 copies of VP2, with channels at each of its five-fold vertices. This capsid constitutes the innermost concentric layer of the viral mature particle. It encapsidates the polymerase VP1, the capping enzyme VP3 and the genomic dsRNA, thereby defining the core. The innermost VP2 capsid and the intermediate VP6 capsid remain intact following cell entry to protect the dsRNA from degradation and to prevent unfavorable antiviral responses in the host cell during all the replication cycle of the virus. Nascent transcripts are transcribed within the structural confines of this double-layered particle (DLP) and are extruded through the channels formed by VP2 N-termini. VP2 is required for the replicase activity of VP1 polymerase. Probably recruits a copy of a VP1-VP3 complex, potentially along with a segment of plus-strand RNA, as a decamer of VP2 assembles. May activate the autoinhibited VP1/RNA complex to coordinate packaging and genome replication.</text>
</comment>
<comment type="subunit">
    <text evidence="1">Homodecamer; each decamer is made up of two conformers of VP2, called VP2A and VP2B. Interacts with a VP1-VP3 complex. Interacts with the intermediate capsid protein VP6. Interacts with NSP5. Interacts (via N-terminus) with NSP2.</text>
</comment>
<comment type="subcellular location">
    <subcellularLocation>
        <location evidence="1">Virion</location>
    </subcellularLocation>
    <text evidence="1">Inner capsid protein. Also found in spherical cytoplasmic structures, called virus factories, that appear early after infection and are the site of viral replication and packaging.</text>
</comment>
<comment type="domain">
    <text evidence="1">The N-terminus binds RNA. It is necessary for encapsidation of VP1 and VP3. The N-termini of 10 VP2 molecules form a cylindrical hub underneath each 5-fold axis of the inner capsid.</text>
</comment>
<comment type="PTM">
    <text evidence="1">Sumoylated with SUMO1 and SUMO2. Sumoylation of viral proteins seems to have a positive role on viral replication.</text>
</comment>
<comment type="similarity">
    <text evidence="1">Belongs to the rotavirus VP2 family.</text>
</comment>
<keyword id="KW-0167">Capsid protein</keyword>
<keyword id="KW-1153">Inner capsid protein</keyword>
<keyword id="KW-0677">Repeat</keyword>
<keyword id="KW-0694">RNA-binding</keyword>
<keyword id="KW-1141">T=2 icosahedral capsid protein</keyword>
<keyword id="KW-0832">Ubl conjugation</keyword>
<keyword id="KW-0946">Virion</keyword>
<proteinExistence type="inferred from homology"/>
<feature type="chain" id="PRO_0000149533" description="Inner capsid protein VP2">
    <location>
        <begin position="1"/>
        <end position="890"/>
    </location>
</feature>
<feature type="region of interest" description="5-fold hub; involved in the encapsidation of VP1 and VP3" evidence="1">
    <location>
        <begin position="1"/>
        <end position="88"/>
    </location>
</feature>
<feature type="region of interest" description="Disordered" evidence="2">
    <location>
        <begin position="1"/>
        <end position="46"/>
    </location>
</feature>
<feature type="region of interest" description="Hydrophobic" evidence="1">
    <location>
        <begin position="404"/>
        <end position="424"/>
    </location>
</feature>
<feature type="region of interest" description="Hydrophobic" evidence="1">
    <location>
        <begin position="432"/>
        <end position="452"/>
    </location>
</feature>
<feature type="compositionally biased region" description="Basic and acidic residues" evidence="2">
    <location>
        <begin position="19"/>
        <end position="30"/>
    </location>
</feature>
<feature type="site" description="Interaction with the intermediate capsid protein VP6" evidence="1">
    <location>
        <position position="232"/>
    </location>
</feature>
<feature type="site" description="Interaction with the intermediate capsid protein VP6" evidence="1">
    <location>
        <position position="236"/>
    </location>
</feature>
<feature type="site" description="Interaction with the intermediate capsid protein VP6" evidence="1">
    <location>
        <position position="849"/>
    </location>
</feature>
<feature type="site" description="Interaction with the intermediate capsid protein VP6" evidence="1">
    <location>
        <position position="851"/>
    </location>
</feature>
<protein>
    <recommendedName>
        <fullName evidence="1">Inner capsid protein VP2</fullName>
    </recommendedName>
</protein>
<dbReference type="EMBL" id="X14942">
    <property type="protein sequence ID" value="CAA33074.1"/>
    <property type="molecule type" value="Genomic_RNA"/>
</dbReference>
<dbReference type="PIR" id="A34008">
    <property type="entry name" value="P2XRWA"/>
</dbReference>
<dbReference type="SMR" id="P11231"/>
<dbReference type="Proteomes" id="UP000006581">
    <property type="component" value="Genome"/>
</dbReference>
<dbReference type="GO" id="GO:0039616">
    <property type="term" value="C:T=2 icosahedral viral capsid"/>
    <property type="evidence" value="ECO:0007669"/>
    <property type="project" value="UniProtKB-UniRule"/>
</dbReference>
<dbReference type="GO" id="GO:0039625">
    <property type="term" value="C:viral inner capsid"/>
    <property type="evidence" value="ECO:0007669"/>
    <property type="project" value="UniProtKB-UniRule"/>
</dbReference>
<dbReference type="GO" id="GO:0019013">
    <property type="term" value="C:viral nucleocapsid"/>
    <property type="evidence" value="ECO:0007669"/>
    <property type="project" value="UniProtKB-UniRule"/>
</dbReference>
<dbReference type="GO" id="GO:0003723">
    <property type="term" value="F:RNA binding"/>
    <property type="evidence" value="ECO:0007669"/>
    <property type="project" value="UniProtKB-UniRule"/>
</dbReference>
<dbReference type="HAMAP" id="MF_04123">
    <property type="entry name" value="Rota_VP2"/>
    <property type="match status" value="1"/>
</dbReference>
<dbReference type="HAMAP" id="MF_04127">
    <property type="entry name" value="Rota_VP2_A"/>
    <property type="match status" value="1"/>
</dbReference>
<dbReference type="InterPro" id="IPR007779">
    <property type="entry name" value="Rotavirus_VP2"/>
</dbReference>
<dbReference type="Pfam" id="PF05087">
    <property type="entry name" value="Rota_VP2"/>
    <property type="match status" value="1"/>
</dbReference>
<organismHost>
    <name type="scientific">Homo sapiens</name>
    <name type="common">Human</name>
    <dbReference type="NCBI Taxonomy" id="9606"/>
</organismHost>